<name>RL11_BUCBP</name>
<dbReference type="EMBL" id="AE016826">
    <property type="protein sequence ID" value="AAO26782.1"/>
    <property type="molecule type" value="Genomic_DNA"/>
</dbReference>
<dbReference type="RefSeq" id="WP_011091183.1">
    <property type="nucleotide sequence ID" value="NC_004545.1"/>
</dbReference>
<dbReference type="SMR" id="Q89B16"/>
<dbReference type="STRING" id="224915.bbp_039"/>
<dbReference type="KEGG" id="bab:bbp_039"/>
<dbReference type="eggNOG" id="COG0080">
    <property type="taxonomic scope" value="Bacteria"/>
</dbReference>
<dbReference type="HOGENOM" id="CLU_074237_2_0_6"/>
<dbReference type="OrthoDB" id="9802408at2"/>
<dbReference type="Proteomes" id="UP000000601">
    <property type="component" value="Chromosome"/>
</dbReference>
<dbReference type="GO" id="GO:0022625">
    <property type="term" value="C:cytosolic large ribosomal subunit"/>
    <property type="evidence" value="ECO:0007669"/>
    <property type="project" value="TreeGrafter"/>
</dbReference>
<dbReference type="GO" id="GO:0070180">
    <property type="term" value="F:large ribosomal subunit rRNA binding"/>
    <property type="evidence" value="ECO:0007669"/>
    <property type="project" value="UniProtKB-UniRule"/>
</dbReference>
<dbReference type="GO" id="GO:0003735">
    <property type="term" value="F:structural constituent of ribosome"/>
    <property type="evidence" value="ECO:0007669"/>
    <property type="project" value="InterPro"/>
</dbReference>
<dbReference type="GO" id="GO:0006412">
    <property type="term" value="P:translation"/>
    <property type="evidence" value="ECO:0007669"/>
    <property type="project" value="UniProtKB-UniRule"/>
</dbReference>
<dbReference type="CDD" id="cd00349">
    <property type="entry name" value="Ribosomal_L11"/>
    <property type="match status" value="1"/>
</dbReference>
<dbReference type="FunFam" id="3.30.1550.10:FF:000001">
    <property type="entry name" value="50S ribosomal protein L11"/>
    <property type="match status" value="1"/>
</dbReference>
<dbReference type="FunFam" id="1.10.10.250:FF:000003">
    <property type="entry name" value="Mitochondrial ribosomal protein L11"/>
    <property type="match status" value="1"/>
</dbReference>
<dbReference type="Gene3D" id="1.10.10.250">
    <property type="entry name" value="Ribosomal protein L11, C-terminal domain"/>
    <property type="match status" value="1"/>
</dbReference>
<dbReference type="Gene3D" id="3.30.1550.10">
    <property type="entry name" value="Ribosomal protein L11/L12, N-terminal domain"/>
    <property type="match status" value="1"/>
</dbReference>
<dbReference type="HAMAP" id="MF_00736">
    <property type="entry name" value="Ribosomal_uL11"/>
    <property type="match status" value="1"/>
</dbReference>
<dbReference type="InterPro" id="IPR000911">
    <property type="entry name" value="Ribosomal_uL11"/>
</dbReference>
<dbReference type="InterPro" id="IPR006519">
    <property type="entry name" value="Ribosomal_uL11_bac-typ"/>
</dbReference>
<dbReference type="InterPro" id="IPR020783">
    <property type="entry name" value="Ribosomal_uL11_C"/>
</dbReference>
<dbReference type="InterPro" id="IPR036769">
    <property type="entry name" value="Ribosomal_uL11_C_sf"/>
</dbReference>
<dbReference type="InterPro" id="IPR020785">
    <property type="entry name" value="Ribosomal_uL11_CS"/>
</dbReference>
<dbReference type="InterPro" id="IPR020784">
    <property type="entry name" value="Ribosomal_uL11_N"/>
</dbReference>
<dbReference type="InterPro" id="IPR036796">
    <property type="entry name" value="Ribosomal_uL11_N_sf"/>
</dbReference>
<dbReference type="NCBIfam" id="TIGR01632">
    <property type="entry name" value="L11_bact"/>
    <property type="match status" value="1"/>
</dbReference>
<dbReference type="PANTHER" id="PTHR11661">
    <property type="entry name" value="60S RIBOSOMAL PROTEIN L12"/>
    <property type="match status" value="1"/>
</dbReference>
<dbReference type="PANTHER" id="PTHR11661:SF1">
    <property type="entry name" value="LARGE RIBOSOMAL SUBUNIT PROTEIN UL11M"/>
    <property type="match status" value="1"/>
</dbReference>
<dbReference type="Pfam" id="PF00298">
    <property type="entry name" value="Ribosomal_L11"/>
    <property type="match status" value="1"/>
</dbReference>
<dbReference type="Pfam" id="PF03946">
    <property type="entry name" value="Ribosomal_L11_N"/>
    <property type="match status" value="1"/>
</dbReference>
<dbReference type="SMART" id="SM00649">
    <property type="entry name" value="RL11"/>
    <property type="match status" value="1"/>
</dbReference>
<dbReference type="SUPFAM" id="SSF54747">
    <property type="entry name" value="Ribosomal L11/L12e N-terminal domain"/>
    <property type="match status" value="1"/>
</dbReference>
<dbReference type="SUPFAM" id="SSF46906">
    <property type="entry name" value="Ribosomal protein L11, C-terminal domain"/>
    <property type="match status" value="1"/>
</dbReference>
<dbReference type="PROSITE" id="PS00359">
    <property type="entry name" value="RIBOSOMAL_L11"/>
    <property type="match status" value="1"/>
</dbReference>
<evidence type="ECO:0000255" key="1">
    <source>
        <dbReference type="HAMAP-Rule" id="MF_00736"/>
    </source>
</evidence>
<evidence type="ECO:0000305" key="2"/>
<organism>
    <name type="scientific">Buchnera aphidicola subsp. Baizongia pistaciae (strain Bp)</name>
    <dbReference type="NCBI Taxonomy" id="224915"/>
    <lineage>
        <taxon>Bacteria</taxon>
        <taxon>Pseudomonadati</taxon>
        <taxon>Pseudomonadota</taxon>
        <taxon>Gammaproteobacteria</taxon>
        <taxon>Enterobacterales</taxon>
        <taxon>Erwiniaceae</taxon>
        <taxon>Buchnera</taxon>
    </lineage>
</organism>
<sequence>MAKTIQAYIKLQVSAGTANPSPPIGPALGQKGINIMEFCKAFNTRTNNLEKGLPIPTIITVYSDKSFSFITKTPPASVLLKKAAGITKGSSKPNQNKVGTITMQQILDIAQIKKIDMTGSNIDNISKSIIGTANSIGLIIAEGTNK</sequence>
<reference key="1">
    <citation type="journal article" date="2003" name="Proc. Natl. Acad. Sci. U.S.A.">
        <title>Reductive genome evolution in Buchnera aphidicola.</title>
        <authorList>
            <person name="van Ham R.C.H.J."/>
            <person name="Kamerbeek J."/>
            <person name="Palacios C."/>
            <person name="Rausell C."/>
            <person name="Abascal F."/>
            <person name="Bastolla U."/>
            <person name="Fernandez J.M."/>
            <person name="Jimenez L."/>
            <person name="Postigo M."/>
            <person name="Silva F.J."/>
            <person name="Tamames J."/>
            <person name="Viguera E."/>
            <person name="Latorre A."/>
            <person name="Valencia A."/>
            <person name="Moran F."/>
            <person name="Moya A."/>
        </authorList>
    </citation>
    <scope>NUCLEOTIDE SEQUENCE [LARGE SCALE GENOMIC DNA]</scope>
    <source>
        <strain>Bp</strain>
    </source>
</reference>
<comment type="function">
    <text evidence="1">Forms part of the ribosomal stalk which helps the ribosome interact with GTP-bound translation factors.</text>
</comment>
<comment type="subunit">
    <text evidence="1">Part of the ribosomal stalk of the 50S ribosomal subunit. Interacts with L10 and the large rRNA to form the base of the stalk. L10 forms an elongated spine to which L12 dimers bind in a sequential fashion forming a multimeric L10(L12)X complex.</text>
</comment>
<comment type="PTM">
    <text evidence="1">One or more lysine residues are methylated.</text>
</comment>
<comment type="similarity">
    <text evidence="1">Belongs to the universal ribosomal protein uL11 family.</text>
</comment>
<feature type="chain" id="PRO_0000104261" description="Large ribosomal subunit protein uL11">
    <location>
        <begin position="1"/>
        <end position="146"/>
    </location>
</feature>
<proteinExistence type="inferred from homology"/>
<gene>
    <name evidence="1" type="primary">rplK</name>
    <name type="ordered locus">bbp_039</name>
</gene>
<keyword id="KW-0488">Methylation</keyword>
<keyword id="KW-1185">Reference proteome</keyword>
<keyword id="KW-0687">Ribonucleoprotein</keyword>
<keyword id="KW-0689">Ribosomal protein</keyword>
<keyword id="KW-0694">RNA-binding</keyword>
<keyword id="KW-0699">rRNA-binding</keyword>
<accession>Q89B16</accession>
<protein>
    <recommendedName>
        <fullName evidence="1">Large ribosomal subunit protein uL11</fullName>
    </recommendedName>
    <alternativeName>
        <fullName evidence="2">50S ribosomal protein L11</fullName>
    </alternativeName>
</protein>